<organism>
    <name type="scientific">Parabacteroides distasonis (strain ATCC 8503 / DSM 20701 / CIP 104284 / JCM 5825 / NCTC 11152)</name>
    <dbReference type="NCBI Taxonomy" id="435591"/>
    <lineage>
        <taxon>Bacteria</taxon>
        <taxon>Pseudomonadati</taxon>
        <taxon>Bacteroidota</taxon>
        <taxon>Bacteroidia</taxon>
        <taxon>Bacteroidales</taxon>
        <taxon>Tannerellaceae</taxon>
        <taxon>Parabacteroides</taxon>
    </lineage>
</organism>
<name>SYL_PARD8</name>
<dbReference type="EC" id="6.1.1.4" evidence="1"/>
<dbReference type="EMBL" id="CP000140">
    <property type="protein sequence ID" value="ABR44716.1"/>
    <property type="molecule type" value="Genomic_DNA"/>
</dbReference>
<dbReference type="RefSeq" id="WP_011967101.1">
    <property type="nucleotide sequence ID" value="NC_009615.1"/>
</dbReference>
<dbReference type="SMR" id="A6LGA2"/>
<dbReference type="STRING" id="435591.BDI_3008"/>
<dbReference type="PaxDb" id="435591-BDI_3008"/>
<dbReference type="KEGG" id="pdi:BDI_3008"/>
<dbReference type="PATRIC" id="fig|435591.13.peg.2967"/>
<dbReference type="eggNOG" id="COG0495">
    <property type="taxonomic scope" value="Bacteria"/>
</dbReference>
<dbReference type="HOGENOM" id="CLU_004427_0_0_10"/>
<dbReference type="BioCyc" id="PDIS435591:G1G5A-3085-MONOMER"/>
<dbReference type="Proteomes" id="UP000000566">
    <property type="component" value="Chromosome"/>
</dbReference>
<dbReference type="GO" id="GO:0005829">
    <property type="term" value="C:cytosol"/>
    <property type="evidence" value="ECO:0007669"/>
    <property type="project" value="TreeGrafter"/>
</dbReference>
<dbReference type="GO" id="GO:0002161">
    <property type="term" value="F:aminoacyl-tRNA deacylase activity"/>
    <property type="evidence" value="ECO:0007669"/>
    <property type="project" value="InterPro"/>
</dbReference>
<dbReference type="GO" id="GO:0005524">
    <property type="term" value="F:ATP binding"/>
    <property type="evidence" value="ECO:0007669"/>
    <property type="project" value="UniProtKB-UniRule"/>
</dbReference>
<dbReference type="GO" id="GO:0004823">
    <property type="term" value="F:leucine-tRNA ligase activity"/>
    <property type="evidence" value="ECO:0007669"/>
    <property type="project" value="UniProtKB-UniRule"/>
</dbReference>
<dbReference type="GO" id="GO:0006429">
    <property type="term" value="P:leucyl-tRNA aminoacylation"/>
    <property type="evidence" value="ECO:0007669"/>
    <property type="project" value="UniProtKB-UniRule"/>
</dbReference>
<dbReference type="CDD" id="cd07958">
    <property type="entry name" value="Anticodon_Ia_Leu_BEm"/>
    <property type="match status" value="1"/>
</dbReference>
<dbReference type="FunFam" id="3.40.50.620:FF:000056">
    <property type="entry name" value="Leucine--tRNA ligase"/>
    <property type="match status" value="1"/>
</dbReference>
<dbReference type="FunFam" id="3.40.50.620:FF:000060">
    <property type="entry name" value="Leucine--tRNA ligase"/>
    <property type="match status" value="1"/>
</dbReference>
<dbReference type="FunFam" id="3.40.50.620:FF:000154">
    <property type="entry name" value="Leucine--tRNA ligase"/>
    <property type="match status" value="1"/>
</dbReference>
<dbReference type="FunFam" id="1.10.730.10:FF:000011">
    <property type="entry name" value="Leucine--tRNA ligase chloroplastic/mitochondrial"/>
    <property type="match status" value="1"/>
</dbReference>
<dbReference type="Gene3D" id="3.40.50.620">
    <property type="entry name" value="HUPs"/>
    <property type="match status" value="3"/>
</dbReference>
<dbReference type="Gene3D" id="1.10.730.10">
    <property type="entry name" value="Isoleucyl-tRNA Synthetase, Domain 1"/>
    <property type="match status" value="1"/>
</dbReference>
<dbReference type="HAMAP" id="MF_00049_B">
    <property type="entry name" value="Leu_tRNA_synth_B"/>
    <property type="match status" value="1"/>
</dbReference>
<dbReference type="InterPro" id="IPR001412">
    <property type="entry name" value="aa-tRNA-synth_I_CS"/>
</dbReference>
<dbReference type="InterPro" id="IPR002300">
    <property type="entry name" value="aa-tRNA-synth_Ia"/>
</dbReference>
<dbReference type="InterPro" id="IPR002302">
    <property type="entry name" value="Leu-tRNA-ligase"/>
</dbReference>
<dbReference type="InterPro" id="IPR025709">
    <property type="entry name" value="Leu_tRNA-synth_edit"/>
</dbReference>
<dbReference type="InterPro" id="IPR013155">
    <property type="entry name" value="M/V/L/I-tRNA-synth_anticd-bd"/>
</dbReference>
<dbReference type="InterPro" id="IPR014729">
    <property type="entry name" value="Rossmann-like_a/b/a_fold"/>
</dbReference>
<dbReference type="InterPro" id="IPR009080">
    <property type="entry name" value="tRNAsynth_Ia_anticodon-bd"/>
</dbReference>
<dbReference type="InterPro" id="IPR009008">
    <property type="entry name" value="Val/Leu/Ile-tRNA-synth_edit"/>
</dbReference>
<dbReference type="NCBIfam" id="TIGR00396">
    <property type="entry name" value="leuS_bact"/>
    <property type="match status" value="1"/>
</dbReference>
<dbReference type="PANTHER" id="PTHR43740:SF2">
    <property type="entry name" value="LEUCINE--TRNA LIGASE, MITOCHONDRIAL"/>
    <property type="match status" value="1"/>
</dbReference>
<dbReference type="PANTHER" id="PTHR43740">
    <property type="entry name" value="LEUCYL-TRNA SYNTHETASE"/>
    <property type="match status" value="1"/>
</dbReference>
<dbReference type="Pfam" id="PF08264">
    <property type="entry name" value="Anticodon_1"/>
    <property type="match status" value="1"/>
</dbReference>
<dbReference type="Pfam" id="PF00133">
    <property type="entry name" value="tRNA-synt_1"/>
    <property type="match status" value="1"/>
</dbReference>
<dbReference type="Pfam" id="PF13603">
    <property type="entry name" value="tRNA-synt_1_2"/>
    <property type="match status" value="1"/>
</dbReference>
<dbReference type="PRINTS" id="PR00985">
    <property type="entry name" value="TRNASYNTHLEU"/>
</dbReference>
<dbReference type="SUPFAM" id="SSF47323">
    <property type="entry name" value="Anticodon-binding domain of a subclass of class I aminoacyl-tRNA synthetases"/>
    <property type="match status" value="1"/>
</dbReference>
<dbReference type="SUPFAM" id="SSF52374">
    <property type="entry name" value="Nucleotidylyl transferase"/>
    <property type="match status" value="1"/>
</dbReference>
<dbReference type="SUPFAM" id="SSF50677">
    <property type="entry name" value="ValRS/IleRS/LeuRS editing domain"/>
    <property type="match status" value="1"/>
</dbReference>
<dbReference type="PROSITE" id="PS00178">
    <property type="entry name" value="AA_TRNA_LIGASE_I"/>
    <property type="match status" value="1"/>
</dbReference>
<protein>
    <recommendedName>
        <fullName evidence="1">Leucine--tRNA ligase</fullName>
        <ecNumber evidence="1">6.1.1.4</ecNumber>
    </recommendedName>
    <alternativeName>
        <fullName evidence="1">Leucyl-tRNA synthetase</fullName>
        <shortName evidence="1">LeuRS</shortName>
    </alternativeName>
</protein>
<evidence type="ECO:0000255" key="1">
    <source>
        <dbReference type="HAMAP-Rule" id="MF_00049"/>
    </source>
</evidence>
<accession>A6LGA2</accession>
<proteinExistence type="inferred from homology"/>
<feature type="chain" id="PRO_1000009385" description="Leucine--tRNA ligase">
    <location>
        <begin position="1"/>
        <end position="946"/>
    </location>
</feature>
<feature type="short sequence motif" description="'HIGH' region">
    <location>
        <begin position="40"/>
        <end position="51"/>
    </location>
</feature>
<feature type="short sequence motif" description="'KMSKS' region">
    <location>
        <begin position="719"/>
        <end position="723"/>
    </location>
</feature>
<feature type="binding site" evidence="1">
    <location>
        <position position="722"/>
    </location>
    <ligand>
        <name>ATP</name>
        <dbReference type="ChEBI" id="CHEBI:30616"/>
    </ligand>
</feature>
<keyword id="KW-0030">Aminoacyl-tRNA synthetase</keyword>
<keyword id="KW-0067">ATP-binding</keyword>
<keyword id="KW-0963">Cytoplasm</keyword>
<keyword id="KW-0436">Ligase</keyword>
<keyword id="KW-0547">Nucleotide-binding</keyword>
<keyword id="KW-0648">Protein biosynthesis</keyword>
<keyword id="KW-1185">Reference proteome</keyword>
<reference key="1">
    <citation type="journal article" date="2007" name="PLoS Biol.">
        <title>Evolution of symbiotic bacteria in the distal human intestine.</title>
        <authorList>
            <person name="Xu J."/>
            <person name="Mahowald M.A."/>
            <person name="Ley R.E."/>
            <person name="Lozupone C.A."/>
            <person name="Hamady M."/>
            <person name="Martens E.C."/>
            <person name="Henrissat B."/>
            <person name="Coutinho P.M."/>
            <person name="Minx P."/>
            <person name="Latreille P."/>
            <person name="Cordum H."/>
            <person name="Van Brunt A."/>
            <person name="Kim K."/>
            <person name="Fulton R.S."/>
            <person name="Fulton L.A."/>
            <person name="Clifton S.W."/>
            <person name="Wilson R.K."/>
            <person name="Knight R.D."/>
            <person name="Gordon J.I."/>
        </authorList>
    </citation>
    <scope>NUCLEOTIDE SEQUENCE [LARGE SCALE GENOMIC DNA]</scope>
    <source>
        <strain>ATCC 8503 / DSM 20701 / CIP 104284 / JCM 5825 / NCTC 11152</strain>
    </source>
</reference>
<sequence>MEYNFREIEKKWHDYWIAEKVYKVEKDTNKPKYYVLDMFPYPSGAGLHVGHPLGYIASDIYSRFKRLQGFNVLHPMGYDAYGLPAEQYAIQTGQHPEITTKNNIARYREQLEKIGFCYDWSREIRTCDPEYYKWTQWAFIRMFNSYYCNDEKQARPISELIQAFETSGTEGLNVACGEELSFTAEEWKAKSDKEKQEILLNYRIAYRGETMVNWCAALGTVLANDEVVNGVSERGGYPVEQKIMRQWCLRVSAYAQRLLDGLDTIDWTDSLKETQKNWIGRSEGAEVRFKVKDSDKEFTIFTTRADTMFGVTFMVLAPESELVQQLTTADQKAEVDAYLDRTKKRTERERIADRQVTGVFSGSYAINPFTGEAVPIWISDYVLAGYGTGAIMAVPAHDSRDYAFAKHFGLEIRPLVEGCDVSKESFDAKEGIVCNSPRTGVTPYCDLSLNGLTIKEAIAATKKYVKDHDLGRVKINYRLRDAIFSRQRYWGEPFPVYYDADSMPQMLPEECLPLLLPEVDKFLPTETGEPPLGHAVKWAWDTVNQKVTEVSKIDNQTIFPLELCTMPGFAGSSAYYLRYMDPHNDKALVAKDVDEYWRNVDLYIGGTEHATGHLIYSRFWNKFLFDLGIVCEEEPFKKLINQGMIQGRSNFVYRINGTNKFVSLNLKDQYEVTPIHVDVNIVSNDLLDIEAFKNWRPEYNDAEFVLEDGKYICGWAVEKMSKSMFNVVNPDMIVEKYGADTLRLYEMFLGPLEQSKPWDTNGIDGVHRFLKKLWGLFFGNTDTLQVTDAEPTADELKSLHKLIKKVTFDIEHFSYNTSISAFMICVNELTSLKCSKRAILEPLITLLAPFAPHIAEELWHQLGHDTTICDARWPKHNEEYLKEKSVVYAISFNGKARYNLELPADISKEDAEKAALNHENSAKWMEGKTVKKVIVVPGKIVNIVVG</sequence>
<gene>
    <name evidence="1" type="primary">leuS</name>
    <name type="ordered locus">BDI_3008</name>
</gene>
<comment type="catalytic activity">
    <reaction evidence="1">
        <text>tRNA(Leu) + L-leucine + ATP = L-leucyl-tRNA(Leu) + AMP + diphosphate</text>
        <dbReference type="Rhea" id="RHEA:11688"/>
        <dbReference type="Rhea" id="RHEA-COMP:9613"/>
        <dbReference type="Rhea" id="RHEA-COMP:9622"/>
        <dbReference type="ChEBI" id="CHEBI:30616"/>
        <dbReference type="ChEBI" id="CHEBI:33019"/>
        <dbReference type="ChEBI" id="CHEBI:57427"/>
        <dbReference type="ChEBI" id="CHEBI:78442"/>
        <dbReference type="ChEBI" id="CHEBI:78494"/>
        <dbReference type="ChEBI" id="CHEBI:456215"/>
        <dbReference type="EC" id="6.1.1.4"/>
    </reaction>
</comment>
<comment type="subcellular location">
    <subcellularLocation>
        <location evidence="1">Cytoplasm</location>
    </subcellularLocation>
</comment>
<comment type="similarity">
    <text evidence="1">Belongs to the class-I aminoacyl-tRNA synthetase family.</text>
</comment>